<name>SEB1_SCHPO</name>
<feature type="chain" id="PRO_0000081902" description="Rpb7-binding protein seb1">
    <location>
        <begin position="1"/>
        <end position="620"/>
    </location>
</feature>
<feature type="domain" description="CID" evidence="2">
    <location>
        <begin position="1"/>
        <end position="151"/>
    </location>
</feature>
<feature type="domain" description="RRM" evidence="1">
    <location>
        <begin position="406"/>
        <end position="478"/>
    </location>
</feature>
<feature type="region of interest" description="Disordered" evidence="3">
    <location>
        <begin position="151"/>
        <end position="191"/>
    </location>
</feature>
<feature type="region of interest" description="Disordered" evidence="3">
    <location>
        <begin position="327"/>
        <end position="398"/>
    </location>
</feature>
<feature type="region of interest" description="Disordered" evidence="3">
    <location>
        <begin position="558"/>
        <end position="620"/>
    </location>
</feature>
<feature type="compositionally biased region" description="Low complexity" evidence="3">
    <location>
        <begin position="361"/>
        <end position="374"/>
    </location>
</feature>
<feature type="compositionally biased region" description="Basic and acidic residues" evidence="3">
    <location>
        <begin position="570"/>
        <end position="580"/>
    </location>
</feature>
<feature type="modified residue" description="Phosphoserine" evidence="6">
    <location>
        <position position="343"/>
    </location>
</feature>
<feature type="helix" evidence="7">
    <location>
        <begin position="4"/>
        <end position="16"/>
    </location>
</feature>
<feature type="strand" evidence="7">
    <location>
        <begin position="17"/>
        <end position="20"/>
    </location>
</feature>
<feature type="helix" evidence="7">
    <location>
        <begin position="23"/>
        <end position="35"/>
    </location>
</feature>
<feature type="helix" evidence="7">
    <location>
        <begin position="36"/>
        <end position="39"/>
    </location>
</feature>
<feature type="helix" evidence="7">
    <location>
        <begin position="40"/>
        <end position="53"/>
    </location>
</feature>
<feature type="helix" evidence="7">
    <location>
        <begin position="56"/>
        <end position="58"/>
    </location>
</feature>
<feature type="helix" evidence="7">
    <location>
        <begin position="59"/>
        <end position="79"/>
    </location>
</feature>
<feature type="strand" evidence="7">
    <location>
        <begin position="84"/>
        <end position="86"/>
    </location>
</feature>
<feature type="helix" evidence="7">
    <location>
        <begin position="92"/>
        <end position="113"/>
    </location>
</feature>
<feature type="helix" evidence="7">
    <location>
        <begin position="116"/>
        <end position="118"/>
    </location>
</feature>
<feature type="helix" evidence="7">
    <location>
        <begin position="119"/>
        <end position="131"/>
    </location>
</feature>
<feature type="helix" evidence="7">
    <location>
        <begin position="137"/>
        <end position="150"/>
    </location>
</feature>
<feature type="strand" evidence="8">
    <location>
        <begin position="390"/>
        <end position="392"/>
    </location>
</feature>
<feature type="strand" evidence="8">
    <location>
        <begin position="400"/>
        <end position="404"/>
    </location>
</feature>
<feature type="strand" evidence="8">
    <location>
        <begin position="407"/>
        <end position="411"/>
    </location>
</feature>
<feature type="helix" evidence="8">
    <location>
        <begin position="419"/>
        <end position="427"/>
    </location>
</feature>
<feature type="strand" evidence="8">
    <location>
        <begin position="432"/>
        <end position="438"/>
    </location>
</feature>
<feature type="helix" evidence="8">
    <location>
        <begin position="439"/>
        <end position="441"/>
    </location>
</feature>
<feature type="strand" evidence="8">
    <location>
        <begin position="443"/>
        <end position="450"/>
    </location>
</feature>
<feature type="helix" evidence="8">
    <location>
        <begin position="451"/>
        <end position="460"/>
    </location>
</feature>
<feature type="strand" evidence="8">
    <location>
        <begin position="462"/>
        <end position="466"/>
    </location>
</feature>
<feature type="strand" evidence="8">
    <location>
        <begin position="469"/>
        <end position="475"/>
    </location>
</feature>
<feature type="helix" evidence="8">
    <location>
        <begin position="482"/>
        <end position="484"/>
    </location>
</feature>
<feature type="turn" evidence="8">
    <location>
        <begin position="487"/>
        <end position="489"/>
    </location>
</feature>
<feature type="strand" evidence="8">
    <location>
        <begin position="490"/>
        <end position="495"/>
    </location>
</feature>
<feature type="helix" evidence="8">
    <location>
        <begin position="496"/>
        <end position="498"/>
    </location>
</feature>
<feature type="helix" evidence="8">
    <location>
        <begin position="501"/>
        <end position="509"/>
    </location>
</feature>
<feature type="strand" evidence="8">
    <location>
        <begin position="511"/>
        <end position="513"/>
    </location>
</feature>
<feature type="turn" evidence="9">
    <location>
        <begin position="514"/>
        <end position="517"/>
    </location>
</feature>
<feature type="strand" evidence="8">
    <location>
        <begin position="522"/>
        <end position="527"/>
    </location>
</feature>
<comment type="function">
    <text evidence="5">Involved in the processing of pol II transcripts.</text>
</comment>
<comment type="subunit">
    <text evidence="5">Interacts with rpb7.</text>
</comment>
<comment type="interaction">
    <interactant intactId="EBI-608019">
        <id>Q9UTE3</id>
    </interactant>
    <interactant intactId="EBI-608029">
        <id>O14459</id>
        <label>rpb7</label>
    </interactant>
    <organismsDiffer>false</organismsDiffer>
    <experiments>3</experiments>
</comment>
<comment type="subcellular location">
    <subcellularLocation>
        <location evidence="4">Nucleus</location>
    </subcellularLocation>
</comment>
<evidence type="ECO:0000255" key="1">
    <source>
        <dbReference type="PROSITE-ProRule" id="PRU00176"/>
    </source>
</evidence>
<evidence type="ECO:0000255" key="2">
    <source>
        <dbReference type="PROSITE-ProRule" id="PRU00724"/>
    </source>
</evidence>
<evidence type="ECO:0000256" key="3">
    <source>
        <dbReference type="SAM" id="MobiDB-lite"/>
    </source>
</evidence>
<evidence type="ECO:0000269" key="4">
    <source>
    </source>
</evidence>
<evidence type="ECO:0000269" key="5">
    <source>
    </source>
</evidence>
<evidence type="ECO:0000269" key="6">
    <source>
    </source>
</evidence>
<evidence type="ECO:0007829" key="7">
    <source>
        <dbReference type="PDB" id="5MDT"/>
    </source>
</evidence>
<evidence type="ECO:0007829" key="8">
    <source>
        <dbReference type="PDB" id="5MDU"/>
    </source>
</evidence>
<evidence type="ECO:0007829" key="9">
    <source>
        <dbReference type="PDB" id="7MI2"/>
    </source>
</evidence>
<reference key="1">
    <citation type="journal article" date="2002" name="Nature">
        <title>The genome sequence of Schizosaccharomyces pombe.</title>
        <authorList>
            <person name="Wood V."/>
            <person name="Gwilliam R."/>
            <person name="Rajandream M.A."/>
            <person name="Lyne M.H."/>
            <person name="Lyne R."/>
            <person name="Stewart A."/>
            <person name="Sgouros J.G."/>
            <person name="Peat N."/>
            <person name="Hayles J."/>
            <person name="Baker S.G."/>
            <person name="Basham D."/>
            <person name="Bowman S."/>
            <person name="Brooks K."/>
            <person name="Brown D."/>
            <person name="Brown S."/>
            <person name="Chillingworth T."/>
            <person name="Churcher C.M."/>
            <person name="Collins M."/>
            <person name="Connor R."/>
            <person name="Cronin A."/>
            <person name="Davis P."/>
            <person name="Feltwell T."/>
            <person name="Fraser A."/>
            <person name="Gentles S."/>
            <person name="Goble A."/>
            <person name="Hamlin N."/>
            <person name="Harris D.E."/>
            <person name="Hidalgo J."/>
            <person name="Hodgson G."/>
            <person name="Holroyd S."/>
            <person name="Hornsby T."/>
            <person name="Howarth S."/>
            <person name="Huckle E.J."/>
            <person name="Hunt S."/>
            <person name="Jagels K."/>
            <person name="James K.D."/>
            <person name="Jones L."/>
            <person name="Jones M."/>
            <person name="Leather S."/>
            <person name="McDonald S."/>
            <person name="McLean J."/>
            <person name="Mooney P."/>
            <person name="Moule S."/>
            <person name="Mungall K.L."/>
            <person name="Murphy L.D."/>
            <person name="Niblett D."/>
            <person name="Odell C."/>
            <person name="Oliver K."/>
            <person name="O'Neil S."/>
            <person name="Pearson D."/>
            <person name="Quail M.A."/>
            <person name="Rabbinowitsch E."/>
            <person name="Rutherford K.M."/>
            <person name="Rutter S."/>
            <person name="Saunders D."/>
            <person name="Seeger K."/>
            <person name="Sharp S."/>
            <person name="Skelton J."/>
            <person name="Simmonds M.N."/>
            <person name="Squares R."/>
            <person name="Squares S."/>
            <person name="Stevens K."/>
            <person name="Taylor K."/>
            <person name="Taylor R.G."/>
            <person name="Tivey A."/>
            <person name="Walsh S.V."/>
            <person name="Warren T."/>
            <person name="Whitehead S."/>
            <person name="Woodward J.R."/>
            <person name="Volckaert G."/>
            <person name="Aert R."/>
            <person name="Robben J."/>
            <person name="Grymonprez B."/>
            <person name="Weltjens I."/>
            <person name="Vanstreels E."/>
            <person name="Rieger M."/>
            <person name="Schaefer M."/>
            <person name="Mueller-Auer S."/>
            <person name="Gabel C."/>
            <person name="Fuchs M."/>
            <person name="Duesterhoeft A."/>
            <person name="Fritzc C."/>
            <person name="Holzer E."/>
            <person name="Moestl D."/>
            <person name="Hilbert H."/>
            <person name="Borzym K."/>
            <person name="Langer I."/>
            <person name="Beck A."/>
            <person name="Lehrach H."/>
            <person name="Reinhardt R."/>
            <person name="Pohl T.M."/>
            <person name="Eger P."/>
            <person name="Zimmermann W."/>
            <person name="Wedler H."/>
            <person name="Wambutt R."/>
            <person name="Purnelle B."/>
            <person name="Goffeau A."/>
            <person name="Cadieu E."/>
            <person name="Dreano S."/>
            <person name="Gloux S."/>
            <person name="Lelaure V."/>
            <person name="Mottier S."/>
            <person name="Galibert F."/>
            <person name="Aves S.J."/>
            <person name="Xiang Z."/>
            <person name="Hunt C."/>
            <person name="Moore K."/>
            <person name="Hurst S.M."/>
            <person name="Lucas M."/>
            <person name="Rochet M."/>
            <person name="Gaillardin C."/>
            <person name="Tallada V.A."/>
            <person name="Garzon A."/>
            <person name="Thode G."/>
            <person name="Daga R.R."/>
            <person name="Cruzado L."/>
            <person name="Jimenez J."/>
            <person name="Sanchez M."/>
            <person name="del Rey F."/>
            <person name="Benito J."/>
            <person name="Dominguez A."/>
            <person name="Revuelta J.L."/>
            <person name="Moreno S."/>
            <person name="Armstrong J."/>
            <person name="Forsburg S.L."/>
            <person name="Cerutti L."/>
            <person name="Lowe T."/>
            <person name="McCombie W.R."/>
            <person name="Paulsen I."/>
            <person name="Potashkin J."/>
            <person name="Shpakovski G.V."/>
            <person name="Ussery D."/>
            <person name="Barrell B.G."/>
            <person name="Nurse P."/>
        </authorList>
    </citation>
    <scope>NUCLEOTIDE SEQUENCE [LARGE SCALE GENOMIC DNA]</scope>
    <source>
        <strain>972 / ATCC 24843</strain>
    </source>
</reference>
<reference key="2">
    <citation type="journal article" date="2000" name="Genes Cells">
        <title>Large-scale screening of intracellular protein localization in living fission yeast cells by the use of a GFP-fusion genomic DNA library.</title>
        <authorList>
            <person name="Ding D.-Q."/>
            <person name="Tomita Y."/>
            <person name="Yamamoto A."/>
            <person name="Chikashige Y."/>
            <person name="Haraguchi T."/>
            <person name="Hiraoka Y."/>
        </authorList>
    </citation>
    <scope>NUCLEOTIDE SEQUENCE [LARGE SCALE GENOMIC DNA] OF 418-604</scope>
    <scope>SUBCELLULAR LOCATION</scope>
    <source>
        <strain>ATCC 38364 / 968</strain>
    </source>
</reference>
<reference key="3">
    <citation type="submission" date="1998-07" db="EMBL/GenBank/DDBJ databases">
        <title>S.pombe hypothetical protein.</title>
        <authorList>
            <person name="Kawamukai M."/>
        </authorList>
    </citation>
    <scope>NUCLEOTIDE SEQUENCE [MRNA] OF 528-620</scope>
</reference>
<reference key="4">
    <citation type="journal article" date="2003" name="Nucleic Acids Res.">
        <title>Rpb7 subunit of RNA polymerase II interacts with an RNA-binding protein involved in processing of transcripts.</title>
        <authorList>
            <person name="Mitsuzawa H."/>
            <person name="Kanda E."/>
            <person name="Ishihama A."/>
        </authorList>
    </citation>
    <scope>FUNCTION</scope>
    <scope>INTERACTION WITH RPB7</scope>
</reference>
<reference key="5">
    <citation type="journal article" date="2008" name="J. Proteome Res.">
        <title>Phosphoproteome analysis of fission yeast.</title>
        <authorList>
            <person name="Wilson-Grady J.T."/>
            <person name="Villen J."/>
            <person name="Gygi S.P."/>
        </authorList>
    </citation>
    <scope>PHOSPHORYLATION [LARGE SCALE ANALYSIS] AT SER-343</scope>
    <scope>IDENTIFICATION BY MASS SPECTROMETRY</scope>
</reference>
<organism>
    <name type="scientific">Schizosaccharomyces pombe (strain 972 / ATCC 24843)</name>
    <name type="common">Fission yeast</name>
    <dbReference type="NCBI Taxonomy" id="284812"/>
    <lineage>
        <taxon>Eukaryota</taxon>
        <taxon>Fungi</taxon>
        <taxon>Dikarya</taxon>
        <taxon>Ascomycota</taxon>
        <taxon>Taphrinomycotina</taxon>
        <taxon>Schizosaccharomycetes</taxon>
        <taxon>Schizosaccharomycetales</taxon>
        <taxon>Schizosaccharomycetaceae</taxon>
        <taxon>Schizosaccharomyces</taxon>
    </lineage>
</organism>
<accession>Q9UTE3</accession>
<accession>O74176</accession>
<accession>Q9UTX2</accession>
<gene>
    <name type="primary">seb1</name>
    <name type="ORF">SPAC222.09</name>
</gene>
<dbReference type="EMBL" id="CU329670">
    <property type="protein sequence ID" value="CAB60701.1"/>
    <property type="molecule type" value="Genomic_DNA"/>
</dbReference>
<dbReference type="EMBL" id="AB027948">
    <property type="protein sequence ID" value="BAA87252.1"/>
    <property type="molecule type" value="Genomic_DNA"/>
</dbReference>
<dbReference type="EMBL" id="AB016219">
    <property type="protein sequence ID" value="BAA31743.1"/>
    <property type="molecule type" value="mRNA"/>
</dbReference>
<dbReference type="PIR" id="T43388">
    <property type="entry name" value="T43388"/>
</dbReference>
<dbReference type="PIR" id="T50150">
    <property type="entry name" value="T50150"/>
</dbReference>
<dbReference type="RefSeq" id="NP_593148.1">
    <property type="nucleotide sequence ID" value="NM_001018545.2"/>
</dbReference>
<dbReference type="PDB" id="5MDT">
    <property type="method" value="X-ray"/>
    <property type="resolution" value="1.62 A"/>
    <property type="chains" value="A=1-152"/>
</dbReference>
<dbReference type="PDB" id="5MDU">
    <property type="method" value="X-ray"/>
    <property type="resolution" value="1.02 A"/>
    <property type="chains" value="A=388-540"/>
</dbReference>
<dbReference type="PDB" id="7MI2">
    <property type="method" value="X-ray"/>
    <property type="resolution" value="1.40 A"/>
    <property type="chains" value="A=388-539"/>
</dbReference>
<dbReference type="PDB" id="8PX5">
    <property type="method" value="X-ray"/>
    <property type="resolution" value="1.77 A"/>
    <property type="chains" value="A=388-540"/>
</dbReference>
<dbReference type="PDBsum" id="5MDT"/>
<dbReference type="PDBsum" id="5MDU"/>
<dbReference type="PDBsum" id="7MI2"/>
<dbReference type="PDBsum" id="8PX5"/>
<dbReference type="SMR" id="Q9UTE3"/>
<dbReference type="BioGRID" id="278429">
    <property type="interactions" value="55"/>
</dbReference>
<dbReference type="FunCoup" id="Q9UTE3">
    <property type="interactions" value="69"/>
</dbReference>
<dbReference type="IntAct" id="Q9UTE3">
    <property type="interactions" value="4"/>
</dbReference>
<dbReference type="STRING" id="284812.Q9UTE3"/>
<dbReference type="iPTMnet" id="Q9UTE3"/>
<dbReference type="PaxDb" id="4896-SPAC222.09.1"/>
<dbReference type="EnsemblFungi" id="SPAC222.09.1">
    <property type="protein sequence ID" value="SPAC222.09.1:pep"/>
    <property type="gene ID" value="SPAC222.09"/>
</dbReference>
<dbReference type="GeneID" id="2541942"/>
<dbReference type="KEGG" id="spo:2541942"/>
<dbReference type="PomBase" id="SPAC222.09">
    <property type="gene designation" value="seb1"/>
</dbReference>
<dbReference type="VEuPathDB" id="FungiDB:SPAC222.09"/>
<dbReference type="eggNOG" id="KOG0132">
    <property type="taxonomic scope" value="Eukaryota"/>
</dbReference>
<dbReference type="HOGENOM" id="CLU_016577_0_0_1"/>
<dbReference type="InParanoid" id="Q9UTE3"/>
<dbReference type="OMA" id="GIVQTCI"/>
<dbReference type="PhylomeDB" id="Q9UTE3"/>
<dbReference type="PRO" id="PR:Q9UTE3"/>
<dbReference type="Proteomes" id="UP000002485">
    <property type="component" value="Chromosome I"/>
</dbReference>
<dbReference type="GO" id="GO:0033620">
    <property type="term" value="C:Mei2 nuclear dot complex"/>
    <property type="evidence" value="ECO:0000314"/>
    <property type="project" value="PomBase"/>
</dbReference>
<dbReference type="GO" id="GO:0005634">
    <property type="term" value="C:nucleus"/>
    <property type="evidence" value="ECO:0000269"/>
    <property type="project" value="PomBase"/>
</dbReference>
<dbReference type="GO" id="GO:0140463">
    <property type="term" value="F:chromatin-protein adaptor activity"/>
    <property type="evidence" value="ECO:0000269"/>
    <property type="project" value="PomBase"/>
</dbReference>
<dbReference type="GO" id="GO:0106222">
    <property type="term" value="F:lncRNA binding"/>
    <property type="evidence" value="ECO:0000314"/>
    <property type="project" value="PomBase"/>
</dbReference>
<dbReference type="GO" id="GO:0140693">
    <property type="term" value="F:molecular condensate scaffold activity"/>
    <property type="evidence" value="ECO:0000269"/>
    <property type="project" value="PomBase"/>
</dbReference>
<dbReference type="GO" id="GO:0003723">
    <property type="term" value="F:RNA binding"/>
    <property type="evidence" value="ECO:0000314"/>
    <property type="project" value="PomBase"/>
</dbReference>
<dbReference type="GO" id="GO:0099122">
    <property type="term" value="F:RNA polymerase II C-terminal domain binding"/>
    <property type="evidence" value="ECO:0000353"/>
    <property type="project" value="PomBase"/>
</dbReference>
<dbReference type="GO" id="GO:0030515">
    <property type="term" value="F:snoRNA binding"/>
    <property type="evidence" value="ECO:0000314"/>
    <property type="project" value="PomBase"/>
</dbReference>
<dbReference type="GO" id="GO:0180010">
    <property type="term" value="P:co-transcriptional mRNA 3'-end processing, cleavage and polyadenylation pathway"/>
    <property type="evidence" value="ECO:0000315"/>
    <property type="project" value="PomBase"/>
</dbReference>
<dbReference type="GO" id="GO:0031124">
    <property type="term" value="P:mRNA 3'-end processing"/>
    <property type="evidence" value="ECO:0000315"/>
    <property type="project" value="PomBase"/>
</dbReference>
<dbReference type="GO" id="GO:0031508">
    <property type="term" value="P:pericentric heterochromatin formation"/>
    <property type="evidence" value="ECO:0000269"/>
    <property type="project" value="PomBase"/>
</dbReference>
<dbReference type="GO" id="GO:0043628">
    <property type="term" value="P:regulatory ncRNA 3'-end processing"/>
    <property type="evidence" value="ECO:0000269"/>
    <property type="project" value="PomBase"/>
</dbReference>
<dbReference type="GO" id="GO:0031126">
    <property type="term" value="P:sno(s)RNA 3'-end processing"/>
    <property type="evidence" value="ECO:0000315"/>
    <property type="project" value="PomBase"/>
</dbReference>
<dbReference type="GO" id="GO:0006369">
    <property type="term" value="P:termination of RNA polymerase II transcription"/>
    <property type="evidence" value="ECO:0000315"/>
    <property type="project" value="PomBase"/>
</dbReference>
<dbReference type="CDD" id="cd16984">
    <property type="entry name" value="CID_Nrd1_like"/>
    <property type="match status" value="1"/>
</dbReference>
<dbReference type="CDD" id="cd12331">
    <property type="entry name" value="RRM_NRD1_SEB1_like"/>
    <property type="match status" value="1"/>
</dbReference>
<dbReference type="FunFam" id="1.25.40.90:FF:000026">
    <property type="entry name" value="RNA binding protein Nrd1"/>
    <property type="match status" value="1"/>
</dbReference>
<dbReference type="FunFam" id="3.30.70.330:FF:000397">
    <property type="entry name" value="RNA binding protein Nrd1"/>
    <property type="match status" value="1"/>
</dbReference>
<dbReference type="Gene3D" id="1.25.40.90">
    <property type="match status" value="1"/>
</dbReference>
<dbReference type="Gene3D" id="3.30.70.330">
    <property type="match status" value="1"/>
</dbReference>
<dbReference type="InterPro" id="IPR006569">
    <property type="entry name" value="CID_dom"/>
</dbReference>
<dbReference type="InterPro" id="IPR008942">
    <property type="entry name" value="ENTH_VHS"/>
</dbReference>
<dbReference type="InterPro" id="IPR034894">
    <property type="entry name" value="Nrd1/Seb1_RRM"/>
</dbReference>
<dbReference type="InterPro" id="IPR048892">
    <property type="entry name" value="Nrd1_Seb1_dom2"/>
</dbReference>
<dbReference type="InterPro" id="IPR012677">
    <property type="entry name" value="Nucleotide-bd_a/b_plait_sf"/>
</dbReference>
<dbReference type="InterPro" id="IPR035979">
    <property type="entry name" value="RBD_domain_sf"/>
</dbReference>
<dbReference type="InterPro" id="IPR000504">
    <property type="entry name" value="RRM_dom"/>
</dbReference>
<dbReference type="Pfam" id="PF04818">
    <property type="entry name" value="CID"/>
    <property type="match status" value="1"/>
</dbReference>
<dbReference type="Pfam" id="PF21380">
    <property type="entry name" value="Nrd1-Seb1_dom2"/>
    <property type="match status" value="1"/>
</dbReference>
<dbReference type="Pfam" id="PF00076">
    <property type="entry name" value="RRM_1"/>
    <property type="match status" value="1"/>
</dbReference>
<dbReference type="SMART" id="SM00582">
    <property type="entry name" value="RPR"/>
    <property type="match status" value="1"/>
</dbReference>
<dbReference type="SMART" id="SM00360">
    <property type="entry name" value="RRM"/>
    <property type="match status" value="1"/>
</dbReference>
<dbReference type="SUPFAM" id="SSF48464">
    <property type="entry name" value="ENTH/VHS domain"/>
    <property type="match status" value="1"/>
</dbReference>
<dbReference type="SUPFAM" id="SSF54928">
    <property type="entry name" value="RNA-binding domain, RBD"/>
    <property type="match status" value="1"/>
</dbReference>
<dbReference type="PROSITE" id="PS51391">
    <property type="entry name" value="CID"/>
    <property type="match status" value="1"/>
</dbReference>
<dbReference type="PROSITE" id="PS50102">
    <property type="entry name" value="RRM"/>
    <property type="match status" value="1"/>
</dbReference>
<sequence>MSGIAEFDGILDSLEHSKTGISGSKILKLTNLSMENVSENAQFVASVYKYAKRAPVTHKLGALYILDSIVRSFQDGAKKNNESFENPVDASFSGGWCKAAEITDSLVADAIQHAPSAHLPKILKLCDIWEKASTFPPEKLESLRSKLKDAMASTEPVSVDSAAAPSQSTNPEGNGGSVGSQAAAPTSRPVENDAASILEALAAFAQKAPVPSAAEESVSTPPQPAVAPSVSAVVPNLPVHPATAINAQSQSGNPLSNPLFQPSNVPQSIPSGPMGMKTGSVNDTQSQQITLMNVLASQNVPPAQIDSIMKAAFPNYNAPFQPAGVGSVPLPAPTSSQSLRLGSLHRSRSPSPRSGRPRRSPSPSHLSIPSTLPPADGVPKPTPDGFPRRFERDPTIPPDSIKVYSRTLFLGGITRSVREPVLRSMFERFGSVQSLILNHNYRHGFLKMFRRDAAEKAQVAMENVPFADTTIRTKWGVGFGPRECSDFSTGISVIPIRLLTDADRTWLVTAEYGGTGGLPITPGIALDEPDIEIGLGISSKAISKRGKDFAMRRDERFRGRKPYRGGPPIHHGERHFDSGNDWHGNPSTVPPPTNPYNPGYPYMDPNYSSGYVSQPPWQPQ</sequence>
<keyword id="KW-0002">3D-structure</keyword>
<keyword id="KW-0539">Nucleus</keyword>
<keyword id="KW-0597">Phosphoprotein</keyword>
<keyword id="KW-1185">Reference proteome</keyword>
<keyword id="KW-0694">RNA-binding</keyword>
<proteinExistence type="evidence at protein level"/>
<protein>
    <recommendedName>
        <fullName>Rpb7-binding protein seb1</fullName>
    </recommendedName>
</protein>